<comment type="function">
    <text evidence="1">Involved in ribosome biogenesis, probably through modulation of rDNA transcription.</text>
</comment>
<comment type="subcellular location">
    <subcellularLocation>
        <location evidence="1">Nucleus</location>
        <location evidence="1">Nucleolus</location>
    </subcellularLocation>
</comment>
<comment type="similarity">
    <text evidence="4">Belongs to the RRT14 family.</text>
</comment>
<dbReference type="EMBL" id="AAFW02000124">
    <property type="protein sequence ID" value="EDN61374.1"/>
    <property type="molecule type" value="Genomic_DNA"/>
</dbReference>
<dbReference type="HOGENOM" id="CLU_095038_0_0_1"/>
<dbReference type="Proteomes" id="UP000007060">
    <property type="component" value="Unassembled WGS sequence"/>
</dbReference>
<dbReference type="GO" id="GO:0005730">
    <property type="term" value="C:nucleolus"/>
    <property type="evidence" value="ECO:0007669"/>
    <property type="project" value="UniProtKB-SubCell"/>
</dbReference>
<dbReference type="InterPro" id="IPR031404">
    <property type="entry name" value="Rrt14"/>
</dbReference>
<dbReference type="Pfam" id="PF17075">
    <property type="entry name" value="RRT14"/>
    <property type="match status" value="1"/>
</dbReference>
<gene>
    <name type="primary">RRT14</name>
    <name type="ORF">SCY_2665</name>
</gene>
<accession>A6ZVE9</accession>
<protein>
    <recommendedName>
        <fullName>Regulator of rDNA transcription 14</fullName>
    </recommendedName>
</protein>
<organism>
    <name type="scientific">Saccharomyces cerevisiae (strain YJM789)</name>
    <name type="common">Baker's yeast</name>
    <dbReference type="NCBI Taxonomy" id="307796"/>
    <lineage>
        <taxon>Eukaryota</taxon>
        <taxon>Fungi</taxon>
        <taxon>Dikarya</taxon>
        <taxon>Ascomycota</taxon>
        <taxon>Saccharomycotina</taxon>
        <taxon>Saccharomycetes</taxon>
        <taxon>Saccharomycetales</taxon>
        <taxon>Saccharomycetaceae</taxon>
        <taxon>Saccharomyces</taxon>
    </lineage>
</organism>
<reference key="1">
    <citation type="journal article" date="2007" name="Proc. Natl. Acad. Sci. U.S.A.">
        <title>Genome sequencing and comparative analysis of Saccharomyces cerevisiae strain YJM789.</title>
        <authorList>
            <person name="Wei W."/>
            <person name="McCusker J.H."/>
            <person name="Hyman R.W."/>
            <person name="Jones T."/>
            <person name="Ning Y."/>
            <person name="Cao Z."/>
            <person name="Gu Z."/>
            <person name="Bruno D."/>
            <person name="Miranda M."/>
            <person name="Nguyen M."/>
            <person name="Wilhelmy J."/>
            <person name="Komp C."/>
            <person name="Tamse R."/>
            <person name="Wang X."/>
            <person name="Jia P."/>
            <person name="Luedi P."/>
            <person name="Oefner P.J."/>
            <person name="David L."/>
            <person name="Dietrich F.S."/>
            <person name="Li Y."/>
            <person name="Davis R.W."/>
            <person name="Steinmetz L.M."/>
        </authorList>
    </citation>
    <scope>NUCLEOTIDE SEQUENCE [LARGE SCALE GENOMIC DNA]</scope>
    <source>
        <strain>YJM789</strain>
    </source>
</reference>
<evidence type="ECO:0000250" key="1"/>
<evidence type="ECO:0000250" key="2">
    <source>
        <dbReference type="UniProtKB" id="P40470"/>
    </source>
</evidence>
<evidence type="ECO:0000256" key="3">
    <source>
        <dbReference type="SAM" id="MobiDB-lite"/>
    </source>
</evidence>
<evidence type="ECO:0000305" key="4"/>
<keyword id="KW-0539">Nucleus</keyword>
<keyword id="KW-0597">Phosphoprotein</keyword>
<keyword id="KW-0804">Transcription</keyword>
<keyword id="KW-0805">Transcription regulation</keyword>
<proteinExistence type="inferred from homology"/>
<name>RRT14_YEAS7</name>
<feature type="chain" id="PRO_0000404351" description="Regulator of rDNA transcription 14">
    <location>
        <begin position="1"/>
        <end position="206"/>
    </location>
</feature>
<feature type="region of interest" description="Disordered" evidence="3">
    <location>
        <begin position="178"/>
        <end position="206"/>
    </location>
</feature>
<feature type="compositionally biased region" description="Acidic residues" evidence="3">
    <location>
        <begin position="197"/>
        <end position="206"/>
    </location>
</feature>
<feature type="modified residue" description="Phosphoserine" evidence="2">
    <location>
        <position position="197"/>
    </location>
</feature>
<feature type="modified residue" description="Phosphoserine" evidence="2">
    <location>
        <position position="202"/>
    </location>
</feature>
<feature type="modified residue" description="Phosphoserine" evidence="2">
    <location>
        <position position="203"/>
    </location>
</feature>
<sequence length="206" mass="23764">MSSSLSQTSKYQATSVVNGLLSNLLPGVPKIRANNGKTSVNNGSKAQLIDRNLKKRVQLQNRDVHKIKKKCKLVKKKQVKKHKLDKEQLEQLAKHQVLKKHQQEGTLTDHERKYLNKLIKRNSQNLRSWDLEEEVRDELEDIQQSILKDTVSTANTDRSKRRRFKRKQFKEDIKGSDFVKDHRYPGLTPGLAPVGLSDEEDSSEED</sequence>